<proteinExistence type="evidence at transcript level"/>
<sequence>MADQLTDDQISEFKEAFSLFDKDGDGCITTKELGTVMRSLGQNPTEAELQDMINEVDADGNGTIDFPEFLNLMARKMKDTDSEEELKEAFRVFDKDQNGFISAAELRHVMTNLGEKLTDEEVDEMIREADVDGDGQINYEEFVKVMMAK</sequence>
<organism>
    <name type="scientific">Lilium longiflorum</name>
    <name type="common">Trumpet lily</name>
    <dbReference type="NCBI Taxonomy" id="4690"/>
    <lineage>
        <taxon>Eukaryota</taxon>
        <taxon>Viridiplantae</taxon>
        <taxon>Streptophyta</taxon>
        <taxon>Embryophyta</taxon>
        <taxon>Tracheophyta</taxon>
        <taxon>Spermatophyta</taxon>
        <taxon>Magnoliopsida</taxon>
        <taxon>Liliopsida</taxon>
        <taxon>Liliales</taxon>
        <taxon>Liliaceae</taxon>
        <taxon>Lilium</taxon>
    </lineage>
</organism>
<evidence type="ECO:0000250" key="1"/>
<evidence type="ECO:0000255" key="2">
    <source>
        <dbReference type="PROSITE-ProRule" id="PRU00448"/>
    </source>
</evidence>
<evidence type="ECO:0000305" key="3"/>
<reference key="1">
    <citation type="submission" date="1993-06" db="EMBL/GenBank/DDBJ databases">
        <title>Structural organization of monocot calmodulin genes and promoter activity in transgenic tobacco plants.</title>
        <authorList>
            <person name="Choi Y."/>
            <person name="Kim S.-R."/>
            <person name="Poovaiah B.W."/>
            <person name="An G."/>
        </authorList>
    </citation>
    <scope>NUCLEOTIDE SEQUENCE [MRNA]</scope>
    <source>
        <strain>cv. Nellie white</strain>
        <tissue>Pollen</tissue>
    </source>
</reference>
<reference key="2">
    <citation type="journal article" date="1996" name="J. Plant Biol.">
        <title>Characterization of an Easter Lily calmodulin cDNA clone.</title>
        <authorList>
            <person name="Kim S.-R."/>
            <person name="An G."/>
        </authorList>
    </citation>
    <scope>NUCLEOTIDE SEQUENCE [MRNA]</scope>
</reference>
<feature type="initiator methionine" description="Removed" evidence="1">
    <location>
        <position position="1"/>
    </location>
</feature>
<feature type="chain" id="PRO_0000198292" description="Calmodulin">
    <location>
        <begin position="2"/>
        <end position="149"/>
    </location>
</feature>
<feature type="domain" description="EF-hand 1" evidence="2">
    <location>
        <begin position="8"/>
        <end position="43"/>
    </location>
</feature>
<feature type="domain" description="EF-hand 2" evidence="2">
    <location>
        <begin position="44"/>
        <end position="79"/>
    </location>
</feature>
<feature type="domain" description="EF-hand 3" evidence="2">
    <location>
        <begin position="81"/>
        <end position="116"/>
    </location>
</feature>
<feature type="domain" description="EF-hand 4" evidence="2">
    <location>
        <begin position="117"/>
        <end position="149"/>
    </location>
</feature>
<feature type="binding site" evidence="2">
    <location>
        <position position="21"/>
    </location>
    <ligand>
        <name>Ca(2+)</name>
        <dbReference type="ChEBI" id="CHEBI:29108"/>
        <label>1</label>
    </ligand>
</feature>
<feature type="binding site" evidence="2">
    <location>
        <position position="23"/>
    </location>
    <ligand>
        <name>Ca(2+)</name>
        <dbReference type="ChEBI" id="CHEBI:29108"/>
        <label>1</label>
    </ligand>
</feature>
<feature type="binding site" evidence="2">
    <location>
        <position position="25"/>
    </location>
    <ligand>
        <name>Ca(2+)</name>
        <dbReference type="ChEBI" id="CHEBI:29108"/>
        <label>1</label>
    </ligand>
</feature>
<feature type="binding site" evidence="2">
    <location>
        <position position="27"/>
    </location>
    <ligand>
        <name>Ca(2+)</name>
        <dbReference type="ChEBI" id="CHEBI:29108"/>
        <label>1</label>
    </ligand>
</feature>
<feature type="binding site" evidence="2">
    <location>
        <position position="32"/>
    </location>
    <ligand>
        <name>Ca(2+)</name>
        <dbReference type="ChEBI" id="CHEBI:29108"/>
        <label>1</label>
    </ligand>
</feature>
<feature type="binding site" evidence="2">
    <location>
        <position position="57"/>
    </location>
    <ligand>
        <name>Ca(2+)</name>
        <dbReference type="ChEBI" id="CHEBI:29108"/>
        <label>2</label>
    </ligand>
</feature>
<feature type="binding site" evidence="2">
    <location>
        <position position="59"/>
    </location>
    <ligand>
        <name>Ca(2+)</name>
        <dbReference type="ChEBI" id="CHEBI:29108"/>
        <label>2</label>
    </ligand>
</feature>
<feature type="binding site" evidence="2">
    <location>
        <position position="61"/>
    </location>
    <ligand>
        <name>Ca(2+)</name>
        <dbReference type="ChEBI" id="CHEBI:29108"/>
        <label>2</label>
    </ligand>
</feature>
<feature type="binding site" evidence="2">
    <location>
        <position position="63"/>
    </location>
    <ligand>
        <name>Ca(2+)</name>
        <dbReference type="ChEBI" id="CHEBI:29108"/>
        <label>2</label>
    </ligand>
</feature>
<feature type="binding site" evidence="2">
    <location>
        <position position="68"/>
    </location>
    <ligand>
        <name>Ca(2+)</name>
        <dbReference type="ChEBI" id="CHEBI:29108"/>
        <label>2</label>
    </ligand>
</feature>
<feature type="binding site" evidence="2">
    <location>
        <position position="94"/>
    </location>
    <ligand>
        <name>Ca(2+)</name>
        <dbReference type="ChEBI" id="CHEBI:29108"/>
        <label>3</label>
    </ligand>
</feature>
<feature type="binding site" evidence="2">
    <location>
        <position position="96"/>
    </location>
    <ligand>
        <name>Ca(2+)</name>
        <dbReference type="ChEBI" id="CHEBI:29108"/>
        <label>3</label>
    </ligand>
</feature>
<feature type="binding site" evidence="2">
    <location>
        <position position="98"/>
    </location>
    <ligand>
        <name>Ca(2+)</name>
        <dbReference type="ChEBI" id="CHEBI:29108"/>
        <label>3</label>
    </ligand>
</feature>
<feature type="binding site" evidence="2">
    <location>
        <position position="105"/>
    </location>
    <ligand>
        <name>Ca(2+)</name>
        <dbReference type="ChEBI" id="CHEBI:29108"/>
        <label>3</label>
    </ligand>
</feature>
<feature type="binding site" evidence="2">
    <location>
        <position position="130"/>
    </location>
    <ligand>
        <name>Ca(2+)</name>
        <dbReference type="ChEBI" id="CHEBI:29108"/>
        <label>4</label>
    </ligand>
</feature>
<feature type="binding site" evidence="2">
    <location>
        <position position="132"/>
    </location>
    <ligand>
        <name>Ca(2+)</name>
        <dbReference type="ChEBI" id="CHEBI:29108"/>
        <label>4</label>
    </ligand>
</feature>
<feature type="binding site" evidence="2">
    <location>
        <position position="134"/>
    </location>
    <ligand>
        <name>Ca(2+)</name>
        <dbReference type="ChEBI" id="CHEBI:29108"/>
        <label>4</label>
    </ligand>
</feature>
<feature type="binding site" evidence="2">
    <location>
        <position position="136"/>
    </location>
    <ligand>
        <name>Ca(2+)</name>
        <dbReference type="ChEBI" id="CHEBI:29108"/>
        <label>4</label>
    </ligand>
</feature>
<feature type="binding site" evidence="2">
    <location>
        <position position="141"/>
    </location>
    <ligand>
        <name>Ca(2+)</name>
        <dbReference type="ChEBI" id="CHEBI:29108"/>
        <label>4</label>
    </ligand>
</feature>
<feature type="modified residue" description="N-acetylalanine" evidence="1">
    <location>
        <position position="2"/>
    </location>
</feature>
<feature type="modified residue" description="N6,N6,N6-trimethyllysine" evidence="1">
    <location>
        <position position="116"/>
    </location>
</feature>
<dbReference type="EMBL" id="L18912">
    <property type="protein sequence ID" value="AAA33397.1"/>
    <property type="molecule type" value="mRNA"/>
</dbReference>
<dbReference type="EMBL" id="Z12839">
    <property type="protein sequence ID" value="CAA78301.1"/>
    <property type="molecule type" value="mRNA"/>
</dbReference>
<dbReference type="PIR" id="S22971">
    <property type="entry name" value="S22971"/>
</dbReference>
<dbReference type="SMR" id="P62201"/>
<dbReference type="GO" id="GO:0016460">
    <property type="term" value="C:myosin II complex"/>
    <property type="evidence" value="ECO:0007669"/>
    <property type="project" value="TreeGrafter"/>
</dbReference>
<dbReference type="GO" id="GO:0005509">
    <property type="term" value="F:calcium ion binding"/>
    <property type="evidence" value="ECO:0007669"/>
    <property type="project" value="InterPro"/>
</dbReference>
<dbReference type="CDD" id="cd00051">
    <property type="entry name" value="EFh"/>
    <property type="match status" value="2"/>
</dbReference>
<dbReference type="FunFam" id="1.10.238.10:FF:000034">
    <property type="entry name" value="Calmodulin"/>
    <property type="match status" value="1"/>
</dbReference>
<dbReference type="FunFam" id="1.10.238.10:FF:000042">
    <property type="entry name" value="Calmodulin"/>
    <property type="match status" value="1"/>
</dbReference>
<dbReference type="Gene3D" id="1.10.238.10">
    <property type="entry name" value="EF-hand"/>
    <property type="match status" value="3"/>
</dbReference>
<dbReference type="InterPro" id="IPR050230">
    <property type="entry name" value="CALM/Myosin/TropC-like"/>
</dbReference>
<dbReference type="InterPro" id="IPR011992">
    <property type="entry name" value="EF-hand-dom_pair"/>
</dbReference>
<dbReference type="InterPro" id="IPR018247">
    <property type="entry name" value="EF_Hand_1_Ca_BS"/>
</dbReference>
<dbReference type="InterPro" id="IPR002048">
    <property type="entry name" value="EF_hand_dom"/>
</dbReference>
<dbReference type="PANTHER" id="PTHR23048:SF53">
    <property type="entry name" value="CALMODULIN"/>
    <property type="match status" value="1"/>
</dbReference>
<dbReference type="PANTHER" id="PTHR23048">
    <property type="entry name" value="MYOSIN LIGHT CHAIN 1, 3"/>
    <property type="match status" value="1"/>
</dbReference>
<dbReference type="Pfam" id="PF13499">
    <property type="entry name" value="EF-hand_7"/>
    <property type="match status" value="2"/>
</dbReference>
<dbReference type="SMART" id="SM00054">
    <property type="entry name" value="EFh"/>
    <property type="match status" value="4"/>
</dbReference>
<dbReference type="SUPFAM" id="SSF47473">
    <property type="entry name" value="EF-hand"/>
    <property type="match status" value="1"/>
</dbReference>
<dbReference type="PROSITE" id="PS00018">
    <property type="entry name" value="EF_HAND_1"/>
    <property type="match status" value="4"/>
</dbReference>
<dbReference type="PROSITE" id="PS50222">
    <property type="entry name" value="EF_HAND_2"/>
    <property type="match status" value="4"/>
</dbReference>
<accession>P62201</accession>
<accession>P27162</accession>
<accession>P34792</accession>
<protein>
    <recommendedName>
        <fullName>Calmodulin</fullName>
        <shortName>CaM</shortName>
    </recommendedName>
</protein>
<name>CALM_LILLO</name>
<keyword id="KW-0007">Acetylation</keyword>
<keyword id="KW-0106">Calcium</keyword>
<keyword id="KW-0479">Metal-binding</keyword>
<keyword id="KW-0488">Methylation</keyword>
<keyword id="KW-0677">Repeat</keyword>
<comment type="function">
    <text>Calmodulin mediates the control of a large number of enzymes, ion channels and other proteins by Ca(2+). Among the enzymes to be stimulated by the calmodulin-Ca(2+) complex are a number of protein kinases and phosphatases.</text>
</comment>
<comment type="miscellaneous">
    <text>This protein has four functional calcium-binding sites.</text>
</comment>
<comment type="similarity">
    <text evidence="3">Belongs to the calmodulin family.</text>
</comment>